<comment type="function">
    <text evidence="5 6 9">NmrA-like family domain-containing oxidoreductase; part of the gene cluster that mediates the biosynthesis of notoamide, a fungal indole alkaloid that belongs to a family of natural products containing a characteristic bicyclo[2.2.2]diazaoctane core (PubMed:20722388). The first step of notoamide biosynthesis involves coupling of L-proline and L-tryptophan by the bimodular NRPS notE, to produce cyclo-L-tryptophan-L-proline called brevianamide F (PubMed:20722388). The reverse prenyltransferase notF then acts as a deoxybrevianamide E synthase and converts brevianamide F to deoxybrevianamide E via reverse prenylation at C-2 of the indole ring leading to the bicyclo[2.2.2]diazaoctane core (PubMed:20722388). Deoxybrevianamide E is further hydroxylated at C-6 of the indole ring, likely catalyzed by the cytochrome P450 monooxygenase notG, to yield 6-hydroxy-deoxybrevianamide E (Probable). 6-hydroxy-deoxybrevianamide E is a specific substrate of the prenyltransferase notC for normal prenylation at C-7 to produce 6-hydroxy-7-prenyl-deoxybrevianamide, also called notoamide S (PubMed:20722388). As the proposed pivotal branching point in notoamide biosynthesis, notoamide S can be diverted to notoamide E through an oxidative pyran ring closure putatively catalyzed by either notH cytochrome P450 monooxygenase or the notD FAD-linked oxidoreductase (Probable). This step would be followed by an indole 2,3-epoxidation-initiated pinacol-like rearrangement catalyzed by the notB FAD-dependent monooxygenase leading to the formation of notoamide C and notoamide D (PubMed:22188465). On the other hand notoamide S is converted to notoamide T by notH (or notD), a bifunctional oxidase that also functions as the intramolecular Diels-Alderase responsible for generation of (+)-notoamide T (Probable). To generate antipodal (-)-notoaminide T, notH' (or notD') in Aspergillus versicolor is expected to catalyze a Diels-Alder reaction leading to the opposite stereochemistry (Probable). The remaining oxidoreductase notD (or notH) likely catalyzes the oxidative pyran ring formation to yield (+)-stephacidin A (Probable). The FAD-dependent monooxygenase notI is highly similar to notB and is predicted to catalyze a similar conversion from (+)-stephacidin A to (-)-notoamide B via the 2,3-epoxidation of (+)-stephacidin A followed by a pinacol-type rearrangement (Probable). Finally, it remains unclear which enzyme could be responsible for the final hydroxylation steps leading to notoamide A and sclerotiamide (Probable). The function of notO in the notoamide biosynthesis has not been determined yet (Probable).</text>
</comment>
<comment type="subcellular location">
    <subcellularLocation>
        <location evidence="2">Membrane</location>
        <topology evidence="2">Single-pass membrane protein</topology>
    </subcellularLocation>
</comment>
<comment type="biotechnology">
    <text evidence="4">Notoamides have been shown to exhibit antitumoral activities (PubMed:17304611). Notoamides A-C show moderate cytotoxicity against HeLa and L1210 cells with IC(50) values in the range of 22-52 mg/ml, but the IC(50) value of notoamide D is greater than 100 mg/ml (PubMed:17304611). Moreover, notoamide C induces G2/M-cell cycle arrest at a concentration of 6.3 mg/ml (PubMed:17304611).</text>
</comment>
<comment type="similarity">
    <text evidence="8">Belongs to the NmrA-type oxidoreductase family.</text>
</comment>
<feature type="chain" id="PRO_0000448815" description="NmrA-like family domain-containing oxidoreductase notO">
    <location>
        <begin position="1"/>
        <end position="330"/>
    </location>
</feature>
<feature type="transmembrane region" description="Helical" evidence="2">
    <location>
        <begin position="12"/>
        <end position="32"/>
    </location>
</feature>
<feature type="region of interest" description="Interaction with ASS1" evidence="1">
    <location>
        <begin position="158"/>
        <end position="202"/>
    </location>
</feature>
<feature type="binding site" evidence="1">
    <location>
        <begin position="12"/>
        <end position="17"/>
    </location>
    <ligand>
        <name>NADP(+)</name>
        <dbReference type="ChEBI" id="CHEBI:58349"/>
    </ligand>
</feature>
<feature type="binding site" evidence="1">
    <location>
        <begin position="38"/>
        <end position="42"/>
    </location>
    <ligand>
        <name>NADP(+)</name>
        <dbReference type="ChEBI" id="CHEBI:58349"/>
    </ligand>
</feature>
<feature type="binding site" evidence="1">
    <location>
        <begin position="59"/>
        <end position="60"/>
    </location>
    <ligand>
        <name>NADP(+)</name>
        <dbReference type="ChEBI" id="CHEBI:58349"/>
    </ligand>
</feature>
<feature type="binding site" evidence="1">
    <location>
        <begin position="80"/>
        <end position="82"/>
    </location>
    <ligand>
        <name>NADP(+)</name>
        <dbReference type="ChEBI" id="CHEBI:58349"/>
    </ligand>
</feature>
<feature type="binding site" evidence="1">
    <location>
        <begin position="160"/>
        <end position="163"/>
    </location>
    <ligand>
        <name>NADP(+)</name>
        <dbReference type="ChEBI" id="CHEBI:58349"/>
    </ligand>
</feature>
<feature type="glycosylation site" description="N-linked (GlcNAc...) asparagine" evidence="3">
    <location>
        <position position="180"/>
    </location>
</feature>
<feature type="glycosylation site" description="N-linked (GlcNAc...) asparagine" evidence="3">
    <location>
        <position position="207"/>
    </location>
</feature>
<accession>E1ACR0</accession>
<reference key="1">
    <citation type="journal article" date="2010" name="J. Am. Chem. Soc.">
        <title>Genome-based characterization of two prenylation steps in the assembly of the stephacidin and notoamide anticancer agents in a marine-derived Aspergillus sp.</title>
        <authorList>
            <person name="Ding Y."/>
            <person name="de Wet J.R."/>
            <person name="Cavalcoli J."/>
            <person name="Li S."/>
            <person name="Greshock T.J."/>
            <person name="Miller K.A."/>
            <person name="Finefield J.M."/>
            <person name="Sunderhaus J.D."/>
            <person name="McAfoos T.J."/>
            <person name="Tsukamoto S."/>
            <person name="Williams R.M."/>
            <person name="Sherman D.H."/>
        </authorList>
    </citation>
    <scope>NUCLEOTIDE SEQUENCE [GENOMIC DNA]</scope>
    <source>
        <strain>MF297-2</strain>
    </source>
</reference>
<reference key="2">
    <citation type="journal article" date="2007" name="Angew. Chem. Int. Ed.">
        <title>Notoamides A-D: prenylated indole alkaloids isolated from a marine-derived fungus, Aspergillus sp.</title>
        <authorList>
            <person name="Kato H."/>
            <person name="Yoshida T."/>
            <person name="Tokue T."/>
            <person name="Nojiri Y."/>
            <person name="Hirota H."/>
            <person name="Ohta T."/>
            <person name="Williams R.M."/>
            <person name="Tsukamoto S."/>
        </authorList>
    </citation>
    <scope>BIOTECHNOLOGY</scope>
</reference>
<reference key="3">
    <citation type="journal article" date="2012" name="J. Am. Chem. Soc.">
        <title>Biochemical characterization of NotB as an FAD-dependent oxidase in the biosynthesis of notoamide indole alkaloids.</title>
        <authorList>
            <person name="Li S."/>
            <person name="Finefield J.M."/>
            <person name="Sunderhaus J.D."/>
            <person name="McAfoos T.J."/>
            <person name="Williams R.M."/>
            <person name="Sherman D.H."/>
        </authorList>
    </citation>
    <scope>FUNCTION</scope>
</reference>
<reference key="4">
    <citation type="journal article" date="2012" name="Med. Chem. Commun.">
        <title>Comparative analysis of the biosynthetic systems for fungal bicyclo[2.2.2]diazaoctane indole alkaloids: the (+)/(-)-notoamide, paraherquamide and malbrancheamide pathways.</title>
        <authorList>
            <person name="Li S."/>
            <person name="Anand K."/>
            <person name="Tran H."/>
            <person name="Yu F."/>
            <person name="Finefield J.M."/>
            <person name="Sunderhaus J.D."/>
            <person name="McAfoos T.J."/>
            <person name="Tsukamoto S."/>
            <person name="Williams R.M."/>
            <person name="Sherman D.H."/>
        </authorList>
    </citation>
    <scope>FUNCTION</scope>
</reference>
<evidence type="ECO:0000250" key="1">
    <source>
        <dbReference type="UniProtKB" id="Q9HBL8"/>
    </source>
</evidence>
<evidence type="ECO:0000255" key="2"/>
<evidence type="ECO:0000255" key="3">
    <source>
        <dbReference type="PROSITE-ProRule" id="PRU00498"/>
    </source>
</evidence>
<evidence type="ECO:0000269" key="4">
    <source>
    </source>
</evidence>
<evidence type="ECO:0000269" key="5">
    <source>
    </source>
</evidence>
<evidence type="ECO:0000269" key="6">
    <source>
    </source>
</evidence>
<evidence type="ECO:0000303" key="7">
    <source>
    </source>
</evidence>
<evidence type="ECO:0000305" key="8"/>
<evidence type="ECO:0000305" key="9">
    <source>
    </source>
</evidence>
<proteinExistence type="evidence at protein level"/>
<name>NOTO_ASPSM</name>
<protein>
    <recommendedName>
        <fullName evidence="7">NmrA-like family domain-containing oxidoreductase notO</fullName>
        <ecNumber evidence="8">1.-.-.-</ecNumber>
    </recommendedName>
    <alternativeName>
        <fullName evidence="7">Notoamide biosynthesis cluster protein O</fullName>
    </alternativeName>
</protein>
<organism>
    <name type="scientific">Aspergillus sp. (strain MF297-2)</name>
    <dbReference type="NCBI Taxonomy" id="877550"/>
    <lineage>
        <taxon>Eukaryota</taxon>
        <taxon>Fungi</taxon>
        <taxon>Dikarya</taxon>
        <taxon>Ascomycota</taxon>
        <taxon>Pezizomycotina</taxon>
        <taxon>Eurotiomycetes</taxon>
        <taxon>Eurotiomycetidae</taxon>
        <taxon>Eurotiales</taxon>
        <taxon>Aspergillaceae</taxon>
        <taxon>Aspergillus</taxon>
    </lineage>
</organism>
<sequence>MVSLQAVQQANVGIGSLPAGLVALFMGATSGIGQSALHHFAQHASSPRIYSIARPSAVRSHETFLDSLRSSNPSGTYNLIEADVSLISEIDRIVADIKENEPKIDILFMSAGFMAFEGRKDTREGLDPSMSTRYYSRLRLVQQLVPLLNNAPSPRVVSVLGGGLESPLNEQDLDLRDPKNWTFWSSSMHSGTMGTLTLERIARANPNLSIVHWFPGTVATPGLVRANQFGMSPPNPTSADEAGQRWAFIATNDRYAVRGGLVPVPIGLSPVQKSGGGIFLVDPAGEGSNNERVLAGLRKRGVDDAVWRFTEGIFASAAKAGRSSQAKDEL</sequence>
<keyword id="KW-0017">Alkaloid metabolism</keyword>
<keyword id="KW-0325">Glycoprotein</keyword>
<keyword id="KW-0472">Membrane</keyword>
<keyword id="KW-0521">NADP</keyword>
<keyword id="KW-0560">Oxidoreductase</keyword>
<keyword id="KW-0812">Transmembrane</keyword>
<keyword id="KW-1133">Transmembrane helix</keyword>
<dbReference type="EC" id="1.-.-.-" evidence="8"/>
<dbReference type="EMBL" id="HM622670">
    <property type="protein sequence ID" value="ADM34148.1"/>
    <property type="molecule type" value="Genomic_DNA"/>
</dbReference>
<dbReference type="SMR" id="E1ACR0"/>
<dbReference type="GlyCosmos" id="E1ACR0">
    <property type="glycosylation" value="2 sites, No reported glycans"/>
</dbReference>
<dbReference type="GO" id="GO:0016020">
    <property type="term" value="C:membrane"/>
    <property type="evidence" value="ECO:0007669"/>
    <property type="project" value="UniProtKB-SubCell"/>
</dbReference>
<dbReference type="GO" id="GO:0016491">
    <property type="term" value="F:oxidoreductase activity"/>
    <property type="evidence" value="ECO:0007669"/>
    <property type="project" value="UniProtKB-KW"/>
</dbReference>
<dbReference type="GO" id="GO:0009820">
    <property type="term" value="P:alkaloid metabolic process"/>
    <property type="evidence" value="ECO:0007669"/>
    <property type="project" value="UniProtKB-KW"/>
</dbReference>
<dbReference type="Gene3D" id="3.40.50.720">
    <property type="entry name" value="NAD(P)-binding Rossmann-like Domain"/>
    <property type="match status" value="1"/>
</dbReference>
<dbReference type="InterPro" id="IPR036291">
    <property type="entry name" value="NAD(P)-bd_dom_sf"/>
</dbReference>
<dbReference type="InterPro" id="IPR002347">
    <property type="entry name" value="SDR_fam"/>
</dbReference>
<dbReference type="InterPro" id="IPR052228">
    <property type="entry name" value="Sec_Metab_Biosynth_Oxidored"/>
</dbReference>
<dbReference type="PANTHER" id="PTHR47534:SF3">
    <property type="entry name" value="ALCOHOL DEHYDROGENASE-LIKE C-TERMINAL DOMAIN-CONTAINING PROTEIN"/>
    <property type="match status" value="1"/>
</dbReference>
<dbReference type="PANTHER" id="PTHR47534">
    <property type="entry name" value="YALI0E05731P"/>
    <property type="match status" value="1"/>
</dbReference>
<dbReference type="Pfam" id="PF00106">
    <property type="entry name" value="adh_short"/>
    <property type="match status" value="1"/>
</dbReference>
<dbReference type="SUPFAM" id="SSF51735">
    <property type="entry name" value="NAD(P)-binding Rossmann-fold domains"/>
    <property type="match status" value="1"/>
</dbReference>
<gene>
    <name evidence="7" type="primary">notO</name>
</gene>